<gene>
    <name type="primary">FGFR1OP2</name>
    <name type="ORF">RCJMB04_10g7</name>
</gene>
<feature type="chain" id="PRO_0000299045" description="FGFR1 oncogene partner 2 homolog">
    <location>
        <begin position="1"/>
        <end position="217"/>
    </location>
</feature>
<feature type="region of interest" description="Disordered" evidence="3">
    <location>
        <begin position="194"/>
        <end position="217"/>
    </location>
</feature>
<feature type="coiled-coil region" evidence="2">
    <location>
        <begin position="6"/>
        <end position="106"/>
    </location>
</feature>
<feature type="coiled-coil region" evidence="2">
    <location>
        <begin position="163"/>
        <end position="188"/>
    </location>
</feature>
<feature type="compositionally biased region" description="Polar residues" evidence="3">
    <location>
        <begin position="199"/>
        <end position="217"/>
    </location>
</feature>
<sequence length="217" mass="25198">MKMSCTIEKALADAKALVERLREHDNAAEALIEQTTALNKRVEAMKQYQEEIQELNEVARHRPRSTLVMGIQQENRQIRELQQENKELRTSLEEHQSALELIMSKYREQMFRLLMASKKDDPSIIMKLKEQHSKELQVHVDQITEMAAVMRKAIEIDDKHGCKEQERIIQLEQENKGLREILQITRESFLNLKKEDASESTSLSGLVTSSDLSLRKS</sequence>
<reference key="1">
    <citation type="journal article" date="2005" name="Genome Biol.">
        <title>Full-length cDNAs from chicken bursal lymphocytes to facilitate gene function analysis.</title>
        <authorList>
            <person name="Caldwell R.B."/>
            <person name="Kierzek A.M."/>
            <person name="Arakawa H."/>
            <person name="Bezzubov Y."/>
            <person name="Zaim J."/>
            <person name="Fiedler P."/>
            <person name="Kutter S."/>
            <person name="Blagodatski A."/>
            <person name="Kostovska D."/>
            <person name="Koter M."/>
            <person name="Plachy J."/>
            <person name="Carninci P."/>
            <person name="Hayashizaki Y."/>
            <person name="Buerstedde J.-M."/>
        </authorList>
    </citation>
    <scope>NUCLEOTIDE SEQUENCE [LARGE SCALE MRNA]</scope>
    <source>
        <strain>CB</strain>
        <tissue>Bursa of Fabricius</tissue>
    </source>
</reference>
<organism>
    <name type="scientific">Gallus gallus</name>
    <name type="common">Chicken</name>
    <dbReference type="NCBI Taxonomy" id="9031"/>
    <lineage>
        <taxon>Eukaryota</taxon>
        <taxon>Metazoa</taxon>
        <taxon>Chordata</taxon>
        <taxon>Craniata</taxon>
        <taxon>Vertebrata</taxon>
        <taxon>Euteleostomi</taxon>
        <taxon>Archelosauria</taxon>
        <taxon>Archosauria</taxon>
        <taxon>Dinosauria</taxon>
        <taxon>Saurischia</taxon>
        <taxon>Theropoda</taxon>
        <taxon>Coelurosauria</taxon>
        <taxon>Aves</taxon>
        <taxon>Neognathae</taxon>
        <taxon>Galloanserae</taxon>
        <taxon>Galliformes</taxon>
        <taxon>Phasianidae</taxon>
        <taxon>Phasianinae</taxon>
        <taxon>Gallus</taxon>
    </lineage>
</organism>
<protein>
    <recommendedName>
        <fullName>FGFR1 oncogene partner 2 homolog</fullName>
    </recommendedName>
</protein>
<keyword id="KW-0175">Coiled coil</keyword>
<keyword id="KW-0963">Cytoplasm</keyword>
<keyword id="KW-1185">Reference proteome</keyword>
<evidence type="ECO:0000250" key="1"/>
<evidence type="ECO:0000255" key="2"/>
<evidence type="ECO:0000256" key="3">
    <source>
        <dbReference type="SAM" id="MobiDB-lite"/>
    </source>
</evidence>
<evidence type="ECO:0000305" key="4"/>
<comment type="subcellular location">
    <subcellularLocation>
        <location evidence="1">Cytoplasm</location>
    </subcellularLocation>
</comment>
<comment type="similarity">
    <text evidence="4">Belongs to the SIKE family.</text>
</comment>
<proteinExistence type="evidence at transcript level"/>
<accession>Q5ZKJ4</accession>
<name>FGOP2_CHICK</name>
<dbReference type="EMBL" id="AJ720090">
    <property type="protein sequence ID" value="CAG31749.1"/>
    <property type="molecule type" value="mRNA"/>
</dbReference>
<dbReference type="RefSeq" id="NP_001007856.1">
    <property type="nucleotide sequence ID" value="NM_001007855.2"/>
</dbReference>
<dbReference type="SMR" id="Q5ZKJ4"/>
<dbReference type="FunCoup" id="Q5ZKJ4">
    <property type="interactions" value="1544"/>
</dbReference>
<dbReference type="STRING" id="9031.ENSGALP00000022765"/>
<dbReference type="PaxDb" id="9031-ENSGALP00000022765"/>
<dbReference type="Ensembl" id="ENSGALT00010035451.1">
    <property type="protein sequence ID" value="ENSGALP00010020627.1"/>
    <property type="gene ID" value="ENSGALG00010014748.1"/>
</dbReference>
<dbReference type="GeneID" id="418214"/>
<dbReference type="KEGG" id="gga:418214"/>
<dbReference type="CTD" id="26127"/>
<dbReference type="VEuPathDB" id="HostDB:geneid_418214"/>
<dbReference type="eggNOG" id="ENOG502QSAD">
    <property type="taxonomic scope" value="Eukaryota"/>
</dbReference>
<dbReference type="GeneTree" id="ENSGT00390000018003"/>
<dbReference type="HOGENOM" id="CLU_073167_1_0_1"/>
<dbReference type="InParanoid" id="Q5ZKJ4"/>
<dbReference type="OMA" id="KYRQHTE"/>
<dbReference type="OrthoDB" id="21214at2759"/>
<dbReference type="PhylomeDB" id="Q5ZKJ4"/>
<dbReference type="TreeFam" id="TF324337"/>
<dbReference type="PRO" id="PR:Q5ZKJ4"/>
<dbReference type="Proteomes" id="UP000000539">
    <property type="component" value="Chromosome 1"/>
</dbReference>
<dbReference type="Bgee" id="ENSGALG00000014084">
    <property type="expression patterns" value="Expressed in spleen and 13 other cell types or tissues"/>
</dbReference>
<dbReference type="GO" id="GO:0005737">
    <property type="term" value="C:cytoplasm"/>
    <property type="evidence" value="ECO:0007669"/>
    <property type="project" value="UniProtKB-SubCell"/>
</dbReference>
<dbReference type="GO" id="GO:0009611">
    <property type="term" value="P:response to wounding"/>
    <property type="evidence" value="ECO:0000318"/>
    <property type="project" value="GO_Central"/>
</dbReference>
<dbReference type="InterPro" id="IPR008555">
    <property type="entry name" value="SIKE"/>
</dbReference>
<dbReference type="PANTHER" id="PTHR12186:SF3">
    <property type="entry name" value="FGFR1 ONCOGENE PARTNER 2"/>
    <property type="match status" value="1"/>
</dbReference>
<dbReference type="PANTHER" id="PTHR12186">
    <property type="entry name" value="SIKE FAMILY MEMBER"/>
    <property type="match status" value="1"/>
</dbReference>
<dbReference type="Pfam" id="PF05769">
    <property type="entry name" value="SIKE"/>
    <property type="match status" value="1"/>
</dbReference>